<dbReference type="EC" id="2.1.1.182" evidence="1"/>
<dbReference type="EMBL" id="CP000753">
    <property type="protein sequence ID" value="ABS07198.1"/>
    <property type="molecule type" value="Genomic_DNA"/>
</dbReference>
<dbReference type="RefSeq" id="WP_006085825.1">
    <property type="nucleotide sequence ID" value="NC_009665.1"/>
</dbReference>
<dbReference type="SMR" id="A6WK59"/>
<dbReference type="GeneID" id="11771364"/>
<dbReference type="KEGG" id="sbm:Shew185_1046"/>
<dbReference type="HOGENOM" id="CLU_041220_0_1_6"/>
<dbReference type="GO" id="GO:0005829">
    <property type="term" value="C:cytosol"/>
    <property type="evidence" value="ECO:0007669"/>
    <property type="project" value="TreeGrafter"/>
</dbReference>
<dbReference type="GO" id="GO:0052908">
    <property type="term" value="F:16S rRNA (adenine(1518)-N(6)/adenine(1519)-N(6))-dimethyltransferase activity"/>
    <property type="evidence" value="ECO:0007669"/>
    <property type="project" value="UniProtKB-EC"/>
</dbReference>
<dbReference type="GO" id="GO:0003723">
    <property type="term" value="F:RNA binding"/>
    <property type="evidence" value="ECO:0007669"/>
    <property type="project" value="UniProtKB-KW"/>
</dbReference>
<dbReference type="CDD" id="cd02440">
    <property type="entry name" value="AdoMet_MTases"/>
    <property type="match status" value="1"/>
</dbReference>
<dbReference type="FunFam" id="1.10.8.100:FF:000001">
    <property type="entry name" value="Ribosomal RNA small subunit methyltransferase A"/>
    <property type="match status" value="1"/>
</dbReference>
<dbReference type="FunFam" id="3.40.50.150:FF:000006">
    <property type="entry name" value="Ribosomal RNA small subunit methyltransferase A"/>
    <property type="match status" value="1"/>
</dbReference>
<dbReference type="Gene3D" id="1.10.8.100">
    <property type="entry name" value="Ribosomal RNA adenine dimethylase-like, domain 2"/>
    <property type="match status" value="1"/>
</dbReference>
<dbReference type="Gene3D" id="3.40.50.150">
    <property type="entry name" value="Vaccinia Virus protein VP39"/>
    <property type="match status" value="1"/>
</dbReference>
<dbReference type="HAMAP" id="MF_00607">
    <property type="entry name" value="16SrRNA_methyltr_A"/>
    <property type="match status" value="1"/>
</dbReference>
<dbReference type="InterPro" id="IPR001737">
    <property type="entry name" value="KsgA/Erm"/>
</dbReference>
<dbReference type="InterPro" id="IPR023165">
    <property type="entry name" value="rRNA_Ade_diMease-like_C"/>
</dbReference>
<dbReference type="InterPro" id="IPR020596">
    <property type="entry name" value="rRNA_Ade_Mease_Trfase_CS"/>
</dbReference>
<dbReference type="InterPro" id="IPR020598">
    <property type="entry name" value="rRNA_Ade_methylase_Trfase_N"/>
</dbReference>
<dbReference type="InterPro" id="IPR011530">
    <property type="entry name" value="rRNA_adenine_dimethylase"/>
</dbReference>
<dbReference type="InterPro" id="IPR029063">
    <property type="entry name" value="SAM-dependent_MTases_sf"/>
</dbReference>
<dbReference type="NCBIfam" id="TIGR00755">
    <property type="entry name" value="ksgA"/>
    <property type="match status" value="1"/>
</dbReference>
<dbReference type="PANTHER" id="PTHR11727">
    <property type="entry name" value="DIMETHYLADENOSINE TRANSFERASE"/>
    <property type="match status" value="1"/>
</dbReference>
<dbReference type="PANTHER" id="PTHR11727:SF7">
    <property type="entry name" value="DIMETHYLADENOSINE TRANSFERASE-RELATED"/>
    <property type="match status" value="1"/>
</dbReference>
<dbReference type="Pfam" id="PF00398">
    <property type="entry name" value="RrnaAD"/>
    <property type="match status" value="1"/>
</dbReference>
<dbReference type="SMART" id="SM00650">
    <property type="entry name" value="rADc"/>
    <property type="match status" value="1"/>
</dbReference>
<dbReference type="SUPFAM" id="SSF53335">
    <property type="entry name" value="S-adenosyl-L-methionine-dependent methyltransferases"/>
    <property type="match status" value="1"/>
</dbReference>
<dbReference type="PROSITE" id="PS01131">
    <property type="entry name" value="RRNA_A_DIMETH"/>
    <property type="match status" value="1"/>
</dbReference>
<dbReference type="PROSITE" id="PS51689">
    <property type="entry name" value="SAM_RNA_A_N6_MT"/>
    <property type="match status" value="1"/>
</dbReference>
<sequence length="268" mass="30106">MSNKVHLGHTARKRFGQNFLTDGNVIDRIVGAIAPDNHHVMVEIGPGLGALTEPVAEAVDNLTVVELDRDLVERLHHHPVLKDKLTIHQGDALQFDFGQLSVPGKKMKVFGNLPYNISTPLMFHLFEFAEQIETMHFMLQKEVVLRLSASPGCKAYGRLTVMAQYFCQVVPVLEVPPHSFTPAPKVDSAVVRLLPYAVKPFPCKDVTVLRHLCTTAFNMRRKTLRNNLKHMLSDDEFEQLGIDSSQRPEQISVQQYVAMANMVCDKKA</sequence>
<reference key="1">
    <citation type="submission" date="2007-07" db="EMBL/GenBank/DDBJ databases">
        <title>Complete sequence of chromosome of Shewanella baltica OS185.</title>
        <authorList>
            <consortium name="US DOE Joint Genome Institute"/>
            <person name="Copeland A."/>
            <person name="Lucas S."/>
            <person name="Lapidus A."/>
            <person name="Barry K."/>
            <person name="Glavina del Rio T."/>
            <person name="Dalin E."/>
            <person name="Tice H."/>
            <person name="Pitluck S."/>
            <person name="Sims D."/>
            <person name="Brettin T."/>
            <person name="Bruce D."/>
            <person name="Detter J.C."/>
            <person name="Han C."/>
            <person name="Schmutz J."/>
            <person name="Larimer F."/>
            <person name="Land M."/>
            <person name="Hauser L."/>
            <person name="Kyrpides N."/>
            <person name="Mikhailova N."/>
            <person name="Brettar I."/>
            <person name="Rodrigues J."/>
            <person name="Konstantinidis K."/>
            <person name="Tiedje J."/>
            <person name="Richardson P."/>
        </authorList>
    </citation>
    <scope>NUCLEOTIDE SEQUENCE [LARGE SCALE GENOMIC DNA]</scope>
    <source>
        <strain>OS185</strain>
    </source>
</reference>
<feature type="chain" id="PRO_1000056667" description="Ribosomal RNA small subunit methyltransferase A">
    <location>
        <begin position="1"/>
        <end position="268"/>
    </location>
</feature>
<feature type="binding site" evidence="1">
    <location>
        <position position="18"/>
    </location>
    <ligand>
        <name>S-adenosyl-L-methionine</name>
        <dbReference type="ChEBI" id="CHEBI:59789"/>
    </ligand>
</feature>
<feature type="binding site" evidence="1">
    <location>
        <position position="20"/>
    </location>
    <ligand>
        <name>S-adenosyl-L-methionine</name>
        <dbReference type="ChEBI" id="CHEBI:59789"/>
    </ligand>
</feature>
<feature type="binding site" evidence="1">
    <location>
        <position position="45"/>
    </location>
    <ligand>
        <name>S-adenosyl-L-methionine</name>
        <dbReference type="ChEBI" id="CHEBI:59789"/>
    </ligand>
</feature>
<feature type="binding site" evidence="1">
    <location>
        <position position="66"/>
    </location>
    <ligand>
        <name>S-adenosyl-L-methionine</name>
        <dbReference type="ChEBI" id="CHEBI:59789"/>
    </ligand>
</feature>
<feature type="binding site" evidence="1">
    <location>
        <position position="91"/>
    </location>
    <ligand>
        <name>S-adenosyl-L-methionine</name>
        <dbReference type="ChEBI" id="CHEBI:59789"/>
    </ligand>
</feature>
<feature type="binding site" evidence="1">
    <location>
        <position position="112"/>
    </location>
    <ligand>
        <name>S-adenosyl-L-methionine</name>
        <dbReference type="ChEBI" id="CHEBI:59789"/>
    </ligand>
</feature>
<evidence type="ECO:0000255" key="1">
    <source>
        <dbReference type="HAMAP-Rule" id="MF_00607"/>
    </source>
</evidence>
<name>RSMA_SHEB8</name>
<protein>
    <recommendedName>
        <fullName evidence="1">Ribosomal RNA small subunit methyltransferase A</fullName>
        <ecNumber evidence="1">2.1.1.182</ecNumber>
    </recommendedName>
    <alternativeName>
        <fullName evidence="1">16S rRNA (adenine(1518)-N(6)/adenine(1519)-N(6))-dimethyltransferase</fullName>
    </alternativeName>
    <alternativeName>
        <fullName evidence="1">16S rRNA dimethyladenosine transferase</fullName>
    </alternativeName>
    <alternativeName>
        <fullName evidence="1">16S rRNA dimethylase</fullName>
    </alternativeName>
    <alternativeName>
        <fullName evidence="1">S-adenosylmethionine-6-N', N'-adenosyl(rRNA) dimethyltransferase</fullName>
    </alternativeName>
</protein>
<proteinExistence type="inferred from homology"/>
<gene>
    <name evidence="1" type="primary">rsmA</name>
    <name evidence="1" type="synonym">ksgA</name>
    <name type="ordered locus">Shew185_1046</name>
</gene>
<keyword id="KW-0963">Cytoplasm</keyword>
<keyword id="KW-0489">Methyltransferase</keyword>
<keyword id="KW-0694">RNA-binding</keyword>
<keyword id="KW-0698">rRNA processing</keyword>
<keyword id="KW-0949">S-adenosyl-L-methionine</keyword>
<keyword id="KW-0808">Transferase</keyword>
<organism>
    <name type="scientific">Shewanella baltica (strain OS185)</name>
    <dbReference type="NCBI Taxonomy" id="402882"/>
    <lineage>
        <taxon>Bacteria</taxon>
        <taxon>Pseudomonadati</taxon>
        <taxon>Pseudomonadota</taxon>
        <taxon>Gammaproteobacteria</taxon>
        <taxon>Alteromonadales</taxon>
        <taxon>Shewanellaceae</taxon>
        <taxon>Shewanella</taxon>
    </lineage>
</organism>
<comment type="function">
    <text evidence="1">Specifically dimethylates two adjacent adenosines (A1518 and A1519) in the loop of a conserved hairpin near the 3'-end of 16S rRNA in the 30S particle. May play a critical role in biogenesis of 30S subunits.</text>
</comment>
<comment type="catalytic activity">
    <reaction evidence="1">
        <text>adenosine(1518)/adenosine(1519) in 16S rRNA + 4 S-adenosyl-L-methionine = N(6)-dimethyladenosine(1518)/N(6)-dimethyladenosine(1519) in 16S rRNA + 4 S-adenosyl-L-homocysteine + 4 H(+)</text>
        <dbReference type="Rhea" id="RHEA:19609"/>
        <dbReference type="Rhea" id="RHEA-COMP:10232"/>
        <dbReference type="Rhea" id="RHEA-COMP:10233"/>
        <dbReference type="ChEBI" id="CHEBI:15378"/>
        <dbReference type="ChEBI" id="CHEBI:57856"/>
        <dbReference type="ChEBI" id="CHEBI:59789"/>
        <dbReference type="ChEBI" id="CHEBI:74411"/>
        <dbReference type="ChEBI" id="CHEBI:74493"/>
        <dbReference type="EC" id="2.1.1.182"/>
    </reaction>
</comment>
<comment type="subcellular location">
    <subcellularLocation>
        <location evidence="1">Cytoplasm</location>
    </subcellularLocation>
</comment>
<comment type="similarity">
    <text evidence="1">Belongs to the class I-like SAM-binding methyltransferase superfamily. rRNA adenine N(6)-methyltransferase family. RsmA subfamily.</text>
</comment>
<accession>A6WK59</accession>